<dbReference type="EMBL" id="CR378674">
    <property type="protein sequence ID" value="CAG21719.1"/>
    <property type="molecule type" value="Genomic_DNA"/>
</dbReference>
<dbReference type="RefSeq" id="WP_011219960.1">
    <property type="nucleotide sequence ID" value="NC_006370.1"/>
</dbReference>
<dbReference type="SMR" id="Q6LLV9"/>
<dbReference type="STRING" id="298386.PBPRA3435"/>
<dbReference type="KEGG" id="ppr:PBPRA3435"/>
<dbReference type="eggNOG" id="COG0081">
    <property type="taxonomic scope" value="Bacteria"/>
</dbReference>
<dbReference type="HOGENOM" id="CLU_062853_0_0_6"/>
<dbReference type="Proteomes" id="UP000000593">
    <property type="component" value="Chromosome 1"/>
</dbReference>
<dbReference type="GO" id="GO:0022625">
    <property type="term" value="C:cytosolic large ribosomal subunit"/>
    <property type="evidence" value="ECO:0007669"/>
    <property type="project" value="TreeGrafter"/>
</dbReference>
<dbReference type="GO" id="GO:0019843">
    <property type="term" value="F:rRNA binding"/>
    <property type="evidence" value="ECO:0007669"/>
    <property type="project" value="UniProtKB-UniRule"/>
</dbReference>
<dbReference type="GO" id="GO:0003735">
    <property type="term" value="F:structural constituent of ribosome"/>
    <property type="evidence" value="ECO:0007669"/>
    <property type="project" value="InterPro"/>
</dbReference>
<dbReference type="GO" id="GO:0000049">
    <property type="term" value="F:tRNA binding"/>
    <property type="evidence" value="ECO:0007669"/>
    <property type="project" value="UniProtKB-KW"/>
</dbReference>
<dbReference type="GO" id="GO:0006417">
    <property type="term" value="P:regulation of translation"/>
    <property type="evidence" value="ECO:0007669"/>
    <property type="project" value="UniProtKB-KW"/>
</dbReference>
<dbReference type="GO" id="GO:0006412">
    <property type="term" value="P:translation"/>
    <property type="evidence" value="ECO:0007669"/>
    <property type="project" value="UniProtKB-UniRule"/>
</dbReference>
<dbReference type="CDD" id="cd00403">
    <property type="entry name" value="Ribosomal_L1"/>
    <property type="match status" value="1"/>
</dbReference>
<dbReference type="FunFam" id="3.40.50.790:FF:000001">
    <property type="entry name" value="50S ribosomal protein L1"/>
    <property type="match status" value="1"/>
</dbReference>
<dbReference type="Gene3D" id="3.30.190.20">
    <property type="match status" value="1"/>
</dbReference>
<dbReference type="Gene3D" id="3.40.50.790">
    <property type="match status" value="1"/>
</dbReference>
<dbReference type="HAMAP" id="MF_01318_B">
    <property type="entry name" value="Ribosomal_uL1_B"/>
    <property type="match status" value="1"/>
</dbReference>
<dbReference type="InterPro" id="IPR005878">
    <property type="entry name" value="Ribosom_uL1_bac-type"/>
</dbReference>
<dbReference type="InterPro" id="IPR002143">
    <property type="entry name" value="Ribosomal_uL1"/>
</dbReference>
<dbReference type="InterPro" id="IPR023674">
    <property type="entry name" value="Ribosomal_uL1-like"/>
</dbReference>
<dbReference type="InterPro" id="IPR028364">
    <property type="entry name" value="Ribosomal_uL1/biogenesis"/>
</dbReference>
<dbReference type="InterPro" id="IPR016095">
    <property type="entry name" value="Ribosomal_uL1_3-a/b-sand"/>
</dbReference>
<dbReference type="InterPro" id="IPR023673">
    <property type="entry name" value="Ribosomal_uL1_CS"/>
</dbReference>
<dbReference type="NCBIfam" id="TIGR01169">
    <property type="entry name" value="rplA_bact"/>
    <property type="match status" value="1"/>
</dbReference>
<dbReference type="PANTHER" id="PTHR36427">
    <property type="entry name" value="54S RIBOSOMAL PROTEIN L1, MITOCHONDRIAL"/>
    <property type="match status" value="1"/>
</dbReference>
<dbReference type="PANTHER" id="PTHR36427:SF3">
    <property type="entry name" value="LARGE RIBOSOMAL SUBUNIT PROTEIN UL1M"/>
    <property type="match status" value="1"/>
</dbReference>
<dbReference type="Pfam" id="PF00687">
    <property type="entry name" value="Ribosomal_L1"/>
    <property type="match status" value="1"/>
</dbReference>
<dbReference type="PIRSF" id="PIRSF002155">
    <property type="entry name" value="Ribosomal_L1"/>
    <property type="match status" value="1"/>
</dbReference>
<dbReference type="SUPFAM" id="SSF56808">
    <property type="entry name" value="Ribosomal protein L1"/>
    <property type="match status" value="1"/>
</dbReference>
<dbReference type="PROSITE" id="PS01199">
    <property type="entry name" value="RIBOSOMAL_L1"/>
    <property type="match status" value="1"/>
</dbReference>
<accession>Q6LLV9</accession>
<keyword id="KW-1185">Reference proteome</keyword>
<keyword id="KW-0678">Repressor</keyword>
<keyword id="KW-0687">Ribonucleoprotein</keyword>
<keyword id="KW-0689">Ribosomal protein</keyword>
<keyword id="KW-0694">RNA-binding</keyword>
<keyword id="KW-0699">rRNA-binding</keyword>
<keyword id="KW-0810">Translation regulation</keyword>
<keyword id="KW-0820">tRNA-binding</keyword>
<comment type="function">
    <text evidence="1">Binds directly to 23S rRNA. The L1 stalk is quite mobile in the ribosome, and is involved in E site tRNA release.</text>
</comment>
<comment type="function">
    <text evidence="1">Protein L1 is also a translational repressor protein, it controls the translation of the L11 operon by binding to its mRNA.</text>
</comment>
<comment type="subunit">
    <text evidence="1">Part of the 50S ribosomal subunit.</text>
</comment>
<comment type="similarity">
    <text evidence="1">Belongs to the universal ribosomal protein uL1 family.</text>
</comment>
<proteinExistence type="inferred from homology"/>
<name>RL1_PHOPR</name>
<gene>
    <name evidence="1" type="primary">rplA</name>
    <name type="ordered locus">PBPRA3435</name>
</gene>
<sequence>MAKITKRMRVIRDKVDATKSYDINEAVVLLKELATAKFVESVDVAINLGIDARKSDQNVRGATVLPHGTGRDIRVAVFTQGANAEAAKEAGADLIGMDDLADQVKKGIMDFDVVIASPDAMRVVGQLGTILGPRGLMPNPKVGTVTPNVAQAVKNAKAGQVRYRNDKNGIIHTTIGKVDFDAAQLKENLESLLVALKKSKPSSAKGIFIKKISISTTMGAGVSLDQGTLEASI</sequence>
<reference key="1">
    <citation type="journal article" date="2005" name="Science">
        <title>Life at depth: Photobacterium profundum genome sequence and expression analysis.</title>
        <authorList>
            <person name="Vezzi A."/>
            <person name="Campanaro S."/>
            <person name="D'Angelo M."/>
            <person name="Simonato F."/>
            <person name="Vitulo N."/>
            <person name="Lauro F.M."/>
            <person name="Cestaro A."/>
            <person name="Malacrida G."/>
            <person name="Simionati B."/>
            <person name="Cannata N."/>
            <person name="Romualdi C."/>
            <person name="Bartlett D.H."/>
            <person name="Valle G."/>
        </authorList>
    </citation>
    <scope>NUCLEOTIDE SEQUENCE [LARGE SCALE GENOMIC DNA]</scope>
    <source>
        <strain>ATCC BAA-1253 / SS9</strain>
    </source>
</reference>
<evidence type="ECO:0000255" key="1">
    <source>
        <dbReference type="HAMAP-Rule" id="MF_01318"/>
    </source>
</evidence>
<evidence type="ECO:0000305" key="2"/>
<protein>
    <recommendedName>
        <fullName evidence="1">Large ribosomal subunit protein uL1</fullName>
    </recommendedName>
    <alternativeName>
        <fullName evidence="2">50S ribosomal protein L1</fullName>
    </alternativeName>
</protein>
<organism>
    <name type="scientific">Photobacterium profundum (strain SS9)</name>
    <dbReference type="NCBI Taxonomy" id="298386"/>
    <lineage>
        <taxon>Bacteria</taxon>
        <taxon>Pseudomonadati</taxon>
        <taxon>Pseudomonadota</taxon>
        <taxon>Gammaproteobacteria</taxon>
        <taxon>Vibrionales</taxon>
        <taxon>Vibrionaceae</taxon>
        <taxon>Photobacterium</taxon>
    </lineage>
</organism>
<feature type="chain" id="PRO_0000125707" description="Large ribosomal subunit protein uL1">
    <location>
        <begin position="1"/>
        <end position="233"/>
    </location>
</feature>